<proteinExistence type="evidence at transcript level"/>
<organism>
    <name type="scientific">Drosophila melanogaster</name>
    <name type="common">Fruit fly</name>
    <dbReference type="NCBI Taxonomy" id="7227"/>
    <lineage>
        <taxon>Eukaryota</taxon>
        <taxon>Metazoa</taxon>
        <taxon>Ecdysozoa</taxon>
        <taxon>Arthropoda</taxon>
        <taxon>Hexapoda</taxon>
        <taxon>Insecta</taxon>
        <taxon>Pterygota</taxon>
        <taxon>Neoptera</taxon>
        <taxon>Endopterygota</taxon>
        <taxon>Diptera</taxon>
        <taxon>Brachycera</taxon>
        <taxon>Muscomorpha</taxon>
        <taxon>Ephydroidea</taxon>
        <taxon>Drosophilidae</taxon>
        <taxon>Drosophila</taxon>
        <taxon>Sophophora</taxon>
    </lineage>
</organism>
<name>MMS22_DROME</name>
<keyword id="KW-0156">Chromatin regulator</keyword>
<keyword id="KW-0158">Chromosome</keyword>
<keyword id="KW-0227">DNA damage</keyword>
<keyword id="KW-0234">DNA repair</keyword>
<keyword id="KW-0539">Nucleus</keyword>
<keyword id="KW-1185">Reference proteome</keyword>
<evidence type="ECO:0000250" key="1">
    <source>
        <dbReference type="UniProtKB" id="Q6ZRQ5"/>
    </source>
</evidence>
<evidence type="ECO:0000305" key="2"/>
<gene>
    <name type="ORF">CG14803</name>
</gene>
<comment type="function">
    <text evidence="1">Involved in recombination-dependent repair of stalled or collapsed replication forks.</text>
</comment>
<comment type="subcellular location">
    <subcellularLocation>
        <location evidence="1">Nucleus</location>
    </subcellularLocation>
    <subcellularLocation>
        <location evidence="1">Chromosome</location>
    </subcellularLocation>
</comment>
<comment type="similarity">
    <text evidence="2">Belongs to the MMS22 family. MMS22L subfamily.</text>
</comment>
<comment type="sequence caution" evidence="2">
    <conflict type="erroneous initiation">
        <sequence resource="EMBL-CDS" id="ACZ54682"/>
    </conflict>
    <text>Extended N-terminus.</text>
</comment>
<reference key="1">
    <citation type="journal article" date="2000" name="Science">
        <title>The genome sequence of Drosophila melanogaster.</title>
        <authorList>
            <person name="Adams M.D."/>
            <person name="Celniker S.E."/>
            <person name="Holt R.A."/>
            <person name="Evans C.A."/>
            <person name="Gocayne J.D."/>
            <person name="Amanatides P.G."/>
            <person name="Scherer S.E."/>
            <person name="Li P.W."/>
            <person name="Hoskins R.A."/>
            <person name="Galle R.F."/>
            <person name="George R.A."/>
            <person name="Lewis S.E."/>
            <person name="Richards S."/>
            <person name="Ashburner M."/>
            <person name="Henderson S.N."/>
            <person name="Sutton G.G."/>
            <person name="Wortman J.R."/>
            <person name="Yandell M.D."/>
            <person name="Zhang Q."/>
            <person name="Chen L.X."/>
            <person name="Brandon R.C."/>
            <person name="Rogers Y.-H.C."/>
            <person name="Blazej R.G."/>
            <person name="Champe M."/>
            <person name="Pfeiffer B.D."/>
            <person name="Wan K.H."/>
            <person name="Doyle C."/>
            <person name="Baxter E.G."/>
            <person name="Helt G."/>
            <person name="Nelson C.R."/>
            <person name="Miklos G.L.G."/>
            <person name="Abril J.F."/>
            <person name="Agbayani A."/>
            <person name="An H.-J."/>
            <person name="Andrews-Pfannkoch C."/>
            <person name="Baldwin D."/>
            <person name="Ballew R.M."/>
            <person name="Basu A."/>
            <person name="Baxendale J."/>
            <person name="Bayraktaroglu L."/>
            <person name="Beasley E.M."/>
            <person name="Beeson K.Y."/>
            <person name="Benos P.V."/>
            <person name="Berman B.P."/>
            <person name="Bhandari D."/>
            <person name="Bolshakov S."/>
            <person name="Borkova D."/>
            <person name="Botchan M.R."/>
            <person name="Bouck J."/>
            <person name="Brokstein P."/>
            <person name="Brottier P."/>
            <person name="Burtis K.C."/>
            <person name="Busam D.A."/>
            <person name="Butler H."/>
            <person name="Cadieu E."/>
            <person name="Center A."/>
            <person name="Chandra I."/>
            <person name="Cherry J.M."/>
            <person name="Cawley S."/>
            <person name="Dahlke C."/>
            <person name="Davenport L.B."/>
            <person name="Davies P."/>
            <person name="de Pablos B."/>
            <person name="Delcher A."/>
            <person name="Deng Z."/>
            <person name="Mays A.D."/>
            <person name="Dew I."/>
            <person name="Dietz S.M."/>
            <person name="Dodson K."/>
            <person name="Doup L.E."/>
            <person name="Downes M."/>
            <person name="Dugan-Rocha S."/>
            <person name="Dunkov B.C."/>
            <person name="Dunn P."/>
            <person name="Durbin K.J."/>
            <person name="Evangelista C.C."/>
            <person name="Ferraz C."/>
            <person name="Ferriera S."/>
            <person name="Fleischmann W."/>
            <person name="Fosler C."/>
            <person name="Gabrielian A.E."/>
            <person name="Garg N.S."/>
            <person name="Gelbart W.M."/>
            <person name="Glasser K."/>
            <person name="Glodek A."/>
            <person name="Gong F."/>
            <person name="Gorrell J.H."/>
            <person name="Gu Z."/>
            <person name="Guan P."/>
            <person name="Harris M."/>
            <person name="Harris N.L."/>
            <person name="Harvey D.A."/>
            <person name="Heiman T.J."/>
            <person name="Hernandez J.R."/>
            <person name="Houck J."/>
            <person name="Hostin D."/>
            <person name="Houston K.A."/>
            <person name="Howland T.J."/>
            <person name="Wei M.-H."/>
            <person name="Ibegwam C."/>
            <person name="Jalali M."/>
            <person name="Kalush F."/>
            <person name="Karpen G.H."/>
            <person name="Ke Z."/>
            <person name="Kennison J.A."/>
            <person name="Ketchum K.A."/>
            <person name="Kimmel B.E."/>
            <person name="Kodira C.D."/>
            <person name="Kraft C.L."/>
            <person name="Kravitz S."/>
            <person name="Kulp D."/>
            <person name="Lai Z."/>
            <person name="Lasko P."/>
            <person name="Lei Y."/>
            <person name="Levitsky A.A."/>
            <person name="Li J.H."/>
            <person name="Li Z."/>
            <person name="Liang Y."/>
            <person name="Lin X."/>
            <person name="Liu X."/>
            <person name="Mattei B."/>
            <person name="McIntosh T.C."/>
            <person name="McLeod M.P."/>
            <person name="McPherson D."/>
            <person name="Merkulov G."/>
            <person name="Milshina N.V."/>
            <person name="Mobarry C."/>
            <person name="Morris J."/>
            <person name="Moshrefi A."/>
            <person name="Mount S.M."/>
            <person name="Moy M."/>
            <person name="Murphy B."/>
            <person name="Murphy L."/>
            <person name="Muzny D.M."/>
            <person name="Nelson D.L."/>
            <person name="Nelson D.R."/>
            <person name="Nelson K.A."/>
            <person name="Nixon K."/>
            <person name="Nusskern D.R."/>
            <person name="Pacleb J.M."/>
            <person name="Palazzolo M."/>
            <person name="Pittman G.S."/>
            <person name="Pan S."/>
            <person name="Pollard J."/>
            <person name="Puri V."/>
            <person name="Reese M.G."/>
            <person name="Reinert K."/>
            <person name="Remington K."/>
            <person name="Saunders R.D.C."/>
            <person name="Scheeler F."/>
            <person name="Shen H."/>
            <person name="Shue B.C."/>
            <person name="Siden-Kiamos I."/>
            <person name="Simpson M."/>
            <person name="Skupski M.P."/>
            <person name="Smith T.J."/>
            <person name="Spier E."/>
            <person name="Spradling A.C."/>
            <person name="Stapleton M."/>
            <person name="Strong R."/>
            <person name="Sun E."/>
            <person name="Svirskas R."/>
            <person name="Tector C."/>
            <person name="Turner R."/>
            <person name="Venter E."/>
            <person name="Wang A.H."/>
            <person name="Wang X."/>
            <person name="Wang Z.-Y."/>
            <person name="Wassarman D.A."/>
            <person name="Weinstock G.M."/>
            <person name="Weissenbach J."/>
            <person name="Williams S.M."/>
            <person name="Woodage T."/>
            <person name="Worley K.C."/>
            <person name="Wu D."/>
            <person name="Yang S."/>
            <person name="Yao Q.A."/>
            <person name="Ye J."/>
            <person name="Yeh R.-F."/>
            <person name="Zaveri J.S."/>
            <person name="Zhan M."/>
            <person name="Zhang G."/>
            <person name="Zhao Q."/>
            <person name="Zheng L."/>
            <person name="Zheng X.H."/>
            <person name="Zhong F.N."/>
            <person name="Zhong W."/>
            <person name="Zhou X."/>
            <person name="Zhu S.C."/>
            <person name="Zhu X."/>
            <person name="Smith H.O."/>
            <person name="Gibbs R.A."/>
            <person name="Myers E.W."/>
            <person name="Rubin G.M."/>
            <person name="Venter J.C."/>
        </authorList>
    </citation>
    <scope>NUCLEOTIDE SEQUENCE [LARGE SCALE GENOMIC DNA]</scope>
    <source>
        <strain>Berkeley</strain>
    </source>
</reference>
<reference key="2">
    <citation type="journal article" date="2002" name="Genome Biol.">
        <title>Annotation of the Drosophila melanogaster euchromatic genome: a systematic review.</title>
        <authorList>
            <person name="Misra S."/>
            <person name="Crosby M.A."/>
            <person name="Mungall C.J."/>
            <person name="Matthews B.B."/>
            <person name="Campbell K.S."/>
            <person name="Hradecky P."/>
            <person name="Huang Y."/>
            <person name="Kaminker J.S."/>
            <person name="Millburn G.H."/>
            <person name="Prochnik S.E."/>
            <person name="Smith C.D."/>
            <person name="Tupy J.L."/>
            <person name="Whitfield E.J."/>
            <person name="Bayraktaroglu L."/>
            <person name="Berman B.P."/>
            <person name="Bettencourt B.R."/>
            <person name="Celniker S.E."/>
            <person name="de Grey A.D.N.J."/>
            <person name="Drysdale R.A."/>
            <person name="Harris N.L."/>
            <person name="Richter J."/>
            <person name="Russo S."/>
            <person name="Schroeder A.J."/>
            <person name="Shu S.Q."/>
            <person name="Stapleton M."/>
            <person name="Yamada C."/>
            <person name="Ashburner M."/>
            <person name="Gelbart W.M."/>
            <person name="Rubin G.M."/>
            <person name="Lewis S.E."/>
        </authorList>
    </citation>
    <scope>GENOME REANNOTATION</scope>
    <source>
        <strain>Berkeley</strain>
    </source>
</reference>
<reference key="3">
    <citation type="journal article" date="2000" name="Science">
        <title>From sequence to chromosome: the tip of the X chromosome of D. melanogaster.</title>
        <authorList>
            <person name="Benos P.V."/>
            <person name="Gatt M.K."/>
            <person name="Ashburner M."/>
            <person name="Murphy L."/>
            <person name="Harris D."/>
            <person name="Barrell B.G."/>
            <person name="Ferraz C."/>
            <person name="Vidal S."/>
            <person name="Brun C."/>
            <person name="Demailles J."/>
            <person name="Cadieu E."/>
            <person name="Dreano S."/>
            <person name="Gloux S."/>
            <person name="Lelaure V."/>
            <person name="Mottier S."/>
            <person name="Galibert F."/>
            <person name="Borkova D."/>
            <person name="Minana B."/>
            <person name="Kafatos F.C."/>
            <person name="Louis C."/>
            <person name="Siden-Kiamos I."/>
            <person name="Bolshakov S."/>
            <person name="Papagiannakis G."/>
            <person name="Spanos L."/>
            <person name="Cox S."/>
            <person name="Madueno E."/>
            <person name="de Pablos B."/>
            <person name="Modolell J."/>
            <person name="Peter A."/>
            <person name="Schoettler P."/>
            <person name="Werner M."/>
            <person name="Mourkioti F."/>
            <person name="Beinert N."/>
            <person name="Dowe G."/>
            <person name="Schaefer U."/>
            <person name="Jaeckle H."/>
            <person name="Bucheton A."/>
            <person name="Callister D.M."/>
            <person name="Campbell L.A."/>
            <person name="Darlamitsou A."/>
            <person name="Henderson N.S."/>
            <person name="McMillan P.J."/>
            <person name="Salles C."/>
            <person name="Tait E.A."/>
            <person name="Valenti P."/>
            <person name="Saunders R.D.C."/>
            <person name="Glover D.M."/>
        </authorList>
    </citation>
    <scope>NUCLEOTIDE SEQUENCE [LARGE SCALE GENOMIC DNA]</scope>
    <source>
        <strain>Oregon-R</strain>
    </source>
</reference>
<reference key="4">
    <citation type="submission" date="2009-11" db="EMBL/GenBank/DDBJ databases">
        <authorList>
            <person name="Carlson J."/>
            <person name="Booth B."/>
            <person name="Frise E."/>
            <person name="Park S."/>
            <person name="Wan K."/>
            <person name="Yu C."/>
            <person name="Celniker S."/>
        </authorList>
    </citation>
    <scope>NUCLEOTIDE SEQUENCE [LARGE SCALE MRNA]</scope>
    <source>
        <strain>Berkeley</strain>
        <tissue>Embryo</tissue>
    </source>
</reference>
<accession>O46089</accession>
<accession>D0Z773</accession>
<accession>Q9W553</accession>
<sequence length="1102" mass="125413">MDYDLFQSDDEEILATFIQATQKQETLSAQIDVDDSEEDLVDGLHLPEFNCSGRDTLKSQLCEGGFLGNGYAQLDPPRSRLDYLCFDFAPAQLAVGAVRNYLYGEACKNVQKLLTVVMGQQHLQATAASMNSGWYRVRQQVTHFYHLMLLLRGNELLPSHFLDGFRQLLNDQLDADTWKVLYFAEHNKGNDCQAPAYHLYHGVLEWRFLDLHILYASGNDQAFLGQLERTLDDLIVCAGHHYRSKHRSELIHSSPFMCRCNKELWLLLKRLIPKWLGERELDFWTLFHKAMQRHKSLHFQGESNAISLAYHELYSWLRLGLARLDEYNSEGWYQPDHSPLTAAPESFQTASLLKQFLASQPDEQQRRVYLIQLSPLQLQLGKPDTDVLCQLWEYFHRSLNCNFSVGTELDQLPLTCSNGSAYVDRYNKLLSKSHIEDLNLSSFTMYAWMLGKTLKLLPSQGRSNQRQKLLGRIFSKFSAAKLLALNEPGIHHVIELFLCLLLCHEDLSELAPKLREMLLCLALEKLPPVRRILVAKGHMALLLLHAQHRLSMDDYVSKLLNQLATIRNDAEVGAIYVGSLQAIFNLADDFNRGEQQLLGPWLAHYVEKCGQASQDRVWQTLHNLILRLSERRAVAGNASGIKEALQQHIMPLVRTQYVSSHSSWLPKLAANFIALENNGDKLLLGFLQGPEPINMAASAQLLLQVLEDGGRPASSTILQVWVKSLVLLNAQHESVLALMPHVTQLEEFRLLAIDPTSLEGGREPLCAFFGALGRRAQQEEAAAHVRMQLSHKLHAYVNHFELWLPPDRSRSELGSRFYSFLAIVIYNCSTLAYVRSKPSCFFHLAMVRFLLTTQLQAGVPPEGRLPQVVHKIFPVLLQGIGRLPYRTDAYVAKTLEQLVQHWTPHFSFSSNAKLVARPYATLLQADVDGELAQFVLQLLVTQFLVVQRRRAGQHAGLVITIMQQLIESTGKEQEEQLLTVLRGVHIPLLEHVMFVDEVDLSRNQVFGLYKVLISHDAYKRSQAVRDMCSNHLRSLAEKHLAHCTYFYFQMLINLAELAPDLVAPILSFIREQAEQVELKRGAGEDVGIRKCLQRLQKVLSRV</sequence>
<dbReference type="EMBL" id="AE014298">
    <property type="protein sequence ID" value="AAF45677.2"/>
    <property type="molecule type" value="Genomic_DNA"/>
</dbReference>
<dbReference type="EMBL" id="AL021106">
    <property type="protein sequence ID" value="CAA15938.1"/>
    <property type="molecule type" value="Genomic_DNA"/>
</dbReference>
<dbReference type="EMBL" id="BT100320">
    <property type="protein sequence ID" value="ACZ54682.1"/>
    <property type="status" value="ALT_INIT"/>
    <property type="molecule type" value="mRNA"/>
</dbReference>
<dbReference type="PIR" id="T12681">
    <property type="entry name" value="T12681"/>
</dbReference>
<dbReference type="RefSeq" id="NP_569950.1">
    <property type="nucleotide sequence ID" value="NM_130594.2"/>
</dbReference>
<dbReference type="BioGRID" id="57688">
    <property type="interactions" value="7"/>
</dbReference>
<dbReference type="DIP" id="DIP-21953N"/>
<dbReference type="FunCoup" id="O46089">
    <property type="interactions" value="51"/>
</dbReference>
<dbReference type="IntAct" id="O46089">
    <property type="interactions" value="3"/>
</dbReference>
<dbReference type="STRING" id="7227.FBpp0070297"/>
<dbReference type="PaxDb" id="7227-FBpp0070297"/>
<dbReference type="EnsemblMetazoa" id="FBtr0070310">
    <property type="protein sequence ID" value="FBpp0070297"/>
    <property type="gene ID" value="FBgn0023513"/>
</dbReference>
<dbReference type="GeneID" id="31142"/>
<dbReference type="KEGG" id="dme:Dmel_CG14803"/>
<dbReference type="UCSC" id="CG14803-RA">
    <property type="organism name" value="d. melanogaster"/>
</dbReference>
<dbReference type="AGR" id="FB:FBgn0023513"/>
<dbReference type="FlyBase" id="FBgn0023513">
    <property type="gene designation" value="CG14803"/>
</dbReference>
<dbReference type="VEuPathDB" id="VectorBase:FBgn0023513"/>
<dbReference type="eggNOG" id="ENOG502QQCR">
    <property type="taxonomic scope" value="Eukaryota"/>
</dbReference>
<dbReference type="GeneTree" id="ENSGT00390000011769"/>
<dbReference type="HOGENOM" id="CLU_281351_0_0_1"/>
<dbReference type="InParanoid" id="O46089"/>
<dbReference type="OMA" id="RVYLCLL"/>
<dbReference type="OrthoDB" id="8193282at2759"/>
<dbReference type="PhylomeDB" id="O46089"/>
<dbReference type="BioGRID-ORCS" id="31142">
    <property type="hits" value="1 hit in 1 CRISPR screen"/>
</dbReference>
<dbReference type="GenomeRNAi" id="31142"/>
<dbReference type="PRO" id="PR:O46089"/>
<dbReference type="Proteomes" id="UP000000803">
    <property type="component" value="Chromosome X"/>
</dbReference>
<dbReference type="Bgee" id="FBgn0023513">
    <property type="expression patterns" value="Expressed in secondary oocyte and 18 other cell types or tissues"/>
</dbReference>
<dbReference type="ExpressionAtlas" id="O46089">
    <property type="expression patterns" value="baseline and differential"/>
</dbReference>
<dbReference type="GO" id="GO:0043596">
    <property type="term" value="C:nuclear replication fork"/>
    <property type="evidence" value="ECO:0000250"/>
    <property type="project" value="FlyBase"/>
</dbReference>
<dbReference type="GO" id="GO:0006325">
    <property type="term" value="P:chromatin organization"/>
    <property type="evidence" value="ECO:0007669"/>
    <property type="project" value="UniProtKB-KW"/>
</dbReference>
<dbReference type="GO" id="GO:0000724">
    <property type="term" value="P:double-strand break repair via homologous recombination"/>
    <property type="evidence" value="ECO:0000250"/>
    <property type="project" value="FlyBase"/>
</dbReference>
<dbReference type="GO" id="GO:0031297">
    <property type="term" value="P:replication fork processing"/>
    <property type="evidence" value="ECO:0000250"/>
    <property type="project" value="FlyBase"/>
</dbReference>
<dbReference type="InterPro" id="IPR016024">
    <property type="entry name" value="ARM-type_fold"/>
</dbReference>
<dbReference type="InterPro" id="IPR042320">
    <property type="entry name" value="MMS22-like"/>
</dbReference>
<dbReference type="InterPro" id="IPR029424">
    <property type="entry name" value="MMS22L_C"/>
</dbReference>
<dbReference type="InterPro" id="IPR029425">
    <property type="entry name" value="MMS22L_N"/>
</dbReference>
<dbReference type="PANTHER" id="PTHR28547">
    <property type="entry name" value="PROTEIN MMS22-LIKE"/>
    <property type="match status" value="1"/>
</dbReference>
<dbReference type="PANTHER" id="PTHR28547:SF1">
    <property type="entry name" value="PROTEIN MMS22-LIKE"/>
    <property type="match status" value="1"/>
</dbReference>
<dbReference type="Pfam" id="PF14911">
    <property type="entry name" value="MMS22L_C"/>
    <property type="match status" value="1"/>
</dbReference>
<dbReference type="Pfam" id="PF14910">
    <property type="entry name" value="MMS22L_N"/>
    <property type="match status" value="1"/>
</dbReference>
<dbReference type="SUPFAM" id="SSF48371">
    <property type="entry name" value="ARM repeat"/>
    <property type="match status" value="1"/>
</dbReference>
<feature type="chain" id="PRO_0000403774" description="Protein MMS22-like">
    <location>
        <begin position="1"/>
        <end position="1102"/>
    </location>
</feature>
<protein>
    <recommendedName>
        <fullName>Protein MMS22-like</fullName>
    </recommendedName>
    <alternativeName>
        <fullName>Methyl methanesulfonate-sensitivity protein 22-like</fullName>
    </alternativeName>
</protein>